<gene>
    <name type="primary">exgD</name>
    <name type="ORF">AO090001000604</name>
</gene>
<protein>
    <recommendedName>
        <fullName>Probable glucan 1,3-beta-glucosidase D</fullName>
        <ecNumber>3.2.1.58</ecNumber>
    </recommendedName>
    <alternativeName>
        <fullName>Exo-1,3-beta-glucanase D</fullName>
    </alternativeName>
</protein>
<comment type="function">
    <text evidence="1">Glucosidase involved in the degradation of cellulosic biomass. Active on lichenan (By similarity).</text>
</comment>
<comment type="catalytic activity">
    <reaction>
        <text>Successive hydrolysis of beta-D-glucose units from the non-reducing ends of (1-&gt;3)-beta-D-glucans, releasing alpha-glucose.</text>
        <dbReference type="EC" id="3.2.1.58"/>
    </reaction>
</comment>
<comment type="subcellular location">
    <subcellularLocation>
        <location evidence="4">Cell membrane</location>
        <topology evidence="4">Single-pass type II membrane protein</topology>
    </subcellularLocation>
</comment>
<comment type="similarity">
    <text evidence="4">Belongs to the glycosyl hydrolase 5 (cellulase A) family.</text>
</comment>
<comment type="sequence caution" evidence="4">
    <conflict type="erroneous initiation">
        <sequence resource="EMBL-CDS" id="BAE57108"/>
    </conflict>
    <text>Truncated N-terminus.</text>
</comment>
<accession>Q2UMV7</accession>
<keyword id="KW-0119">Carbohydrate metabolism</keyword>
<keyword id="KW-1003">Cell membrane</keyword>
<keyword id="KW-0961">Cell wall biogenesis/degradation</keyword>
<keyword id="KW-0325">Glycoprotein</keyword>
<keyword id="KW-0326">Glycosidase</keyword>
<keyword id="KW-0378">Hydrolase</keyword>
<keyword id="KW-0472">Membrane</keyword>
<keyword id="KW-0624">Polysaccharide degradation</keyword>
<keyword id="KW-1185">Reference proteome</keyword>
<keyword id="KW-0735">Signal-anchor</keyword>
<keyword id="KW-0812">Transmembrane</keyword>
<keyword id="KW-1133">Transmembrane helix</keyword>
<reference key="1">
    <citation type="journal article" date="2005" name="Nature">
        <title>Genome sequencing and analysis of Aspergillus oryzae.</title>
        <authorList>
            <person name="Machida M."/>
            <person name="Asai K."/>
            <person name="Sano M."/>
            <person name="Tanaka T."/>
            <person name="Kumagai T."/>
            <person name="Terai G."/>
            <person name="Kusumoto K."/>
            <person name="Arima T."/>
            <person name="Akita O."/>
            <person name="Kashiwagi Y."/>
            <person name="Abe K."/>
            <person name="Gomi K."/>
            <person name="Horiuchi H."/>
            <person name="Kitamoto K."/>
            <person name="Kobayashi T."/>
            <person name="Takeuchi M."/>
            <person name="Denning D.W."/>
            <person name="Galagan J.E."/>
            <person name="Nierman W.C."/>
            <person name="Yu J."/>
            <person name="Archer D.B."/>
            <person name="Bennett J.W."/>
            <person name="Bhatnagar D."/>
            <person name="Cleveland T.E."/>
            <person name="Fedorova N.D."/>
            <person name="Gotoh O."/>
            <person name="Horikawa H."/>
            <person name="Hosoyama A."/>
            <person name="Ichinomiya M."/>
            <person name="Igarashi R."/>
            <person name="Iwashita K."/>
            <person name="Juvvadi P.R."/>
            <person name="Kato M."/>
            <person name="Kato Y."/>
            <person name="Kin T."/>
            <person name="Kokubun A."/>
            <person name="Maeda H."/>
            <person name="Maeyama N."/>
            <person name="Maruyama J."/>
            <person name="Nagasaki H."/>
            <person name="Nakajima T."/>
            <person name="Oda K."/>
            <person name="Okada K."/>
            <person name="Paulsen I."/>
            <person name="Sakamoto K."/>
            <person name="Sawano T."/>
            <person name="Takahashi M."/>
            <person name="Takase K."/>
            <person name="Terabayashi Y."/>
            <person name="Wortman J.R."/>
            <person name="Yamada O."/>
            <person name="Yamagata Y."/>
            <person name="Anazawa H."/>
            <person name="Hata Y."/>
            <person name="Koide Y."/>
            <person name="Komori T."/>
            <person name="Koyama Y."/>
            <person name="Minetoki T."/>
            <person name="Suharnan S."/>
            <person name="Tanaka A."/>
            <person name="Isono K."/>
            <person name="Kuhara S."/>
            <person name="Ogasawara N."/>
            <person name="Kikuchi H."/>
        </authorList>
    </citation>
    <scope>NUCLEOTIDE SEQUENCE [LARGE SCALE GENOMIC DNA]</scope>
    <source>
        <strain>ATCC 42149 / RIB 40</strain>
    </source>
</reference>
<proteinExistence type="inferred from homology"/>
<evidence type="ECO:0000250" key="1"/>
<evidence type="ECO:0000255" key="2"/>
<evidence type="ECO:0000256" key="3">
    <source>
        <dbReference type="SAM" id="MobiDB-lite"/>
    </source>
</evidence>
<evidence type="ECO:0000305" key="4"/>
<name>EXGD_ASPOR</name>
<dbReference type="EC" id="3.2.1.58"/>
<dbReference type="EMBL" id="BA000050">
    <property type="protein sequence ID" value="BAE57108.1"/>
    <property type="status" value="ALT_INIT"/>
    <property type="molecule type" value="Genomic_DNA"/>
</dbReference>
<dbReference type="RefSeq" id="XP_001819110.2">
    <property type="nucleotide sequence ID" value="XM_001819058.2"/>
</dbReference>
<dbReference type="SMR" id="Q2UMV7"/>
<dbReference type="STRING" id="510516.Q2UMV7"/>
<dbReference type="CAZy" id="GH5">
    <property type="family name" value="Glycoside Hydrolase Family 5"/>
</dbReference>
<dbReference type="GlyCosmos" id="Q2UMV7">
    <property type="glycosylation" value="11 sites, No reported glycans"/>
</dbReference>
<dbReference type="EnsemblFungi" id="BAE57108">
    <property type="protein sequence ID" value="BAE57108"/>
    <property type="gene ID" value="AO090001000604"/>
</dbReference>
<dbReference type="GeneID" id="5991081"/>
<dbReference type="KEGG" id="aor:AO090001000604"/>
<dbReference type="VEuPathDB" id="FungiDB:AO090001000604"/>
<dbReference type="Proteomes" id="UP000006564">
    <property type="component" value="Chromosome 2"/>
</dbReference>
<dbReference type="GO" id="GO:0009986">
    <property type="term" value="C:cell surface"/>
    <property type="evidence" value="ECO:0007669"/>
    <property type="project" value="TreeGrafter"/>
</dbReference>
<dbReference type="GO" id="GO:0005576">
    <property type="term" value="C:extracellular region"/>
    <property type="evidence" value="ECO:0007669"/>
    <property type="project" value="TreeGrafter"/>
</dbReference>
<dbReference type="GO" id="GO:0005886">
    <property type="term" value="C:plasma membrane"/>
    <property type="evidence" value="ECO:0007669"/>
    <property type="project" value="UniProtKB-SubCell"/>
</dbReference>
<dbReference type="GO" id="GO:0004338">
    <property type="term" value="F:glucan exo-1,3-beta-glucosidase activity"/>
    <property type="evidence" value="ECO:0007669"/>
    <property type="project" value="UniProtKB-EC"/>
</dbReference>
<dbReference type="GO" id="GO:0071555">
    <property type="term" value="P:cell wall organization"/>
    <property type="evidence" value="ECO:0007669"/>
    <property type="project" value="UniProtKB-KW"/>
</dbReference>
<dbReference type="GO" id="GO:0009251">
    <property type="term" value="P:glucan catabolic process"/>
    <property type="evidence" value="ECO:0007669"/>
    <property type="project" value="TreeGrafter"/>
</dbReference>
<dbReference type="FunFam" id="3.20.20.80:FF:000033">
    <property type="entry name" value="Glucan 1,3-beta-glucosidase A"/>
    <property type="match status" value="1"/>
</dbReference>
<dbReference type="Gene3D" id="3.20.20.80">
    <property type="entry name" value="Glycosidases"/>
    <property type="match status" value="1"/>
</dbReference>
<dbReference type="InterPro" id="IPR001547">
    <property type="entry name" value="Glyco_hydro_5"/>
</dbReference>
<dbReference type="InterPro" id="IPR017853">
    <property type="entry name" value="Glycoside_hydrolase_SF"/>
</dbReference>
<dbReference type="InterPro" id="IPR050386">
    <property type="entry name" value="Glycosyl_hydrolase_5"/>
</dbReference>
<dbReference type="PANTHER" id="PTHR31297:SF34">
    <property type="entry name" value="GLUCAN 1,3-BETA-GLUCOSIDASE 2"/>
    <property type="match status" value="1"/>
</dbReference>
<dbReference type="PANTHER" id="PTHR31297">
    <property type="entry name" value="GLUCAN ENDO-1,6-BETA-GLUCOSIDASE B"/>
    <property type="match status" value="1"/>
</dbReference>
<dbReference type="Pfam" id="PF00150">
    <property type="entry name" value="Cellulase"/>
    <property type="match status" value="1"/>
</dbReference>
<dbReference type="SUPFAM" id="SSF51445">
    <property type="entry name" value="(Trans)glycosidases"/>
    <property type="match status" value="1"/>
</dbReference>
<sequence length="831" mass="95127">MPSHSRSRDRYRSERDPSRRYREVYDDDDDDDFDYHPRERRRYRRDDYQHDIRSHESPNYNDDLNEYDAAAEDPAVPLRSHDVEGRRRERSRAGESPIASPSRRDRNRGGEEYRRHGTYGDGGSPTRAMRDRRHRSRDGQRARPRDMDREARRQRRRERARGAAAMKHKSSDSTNSGSHLLSADALAKLRSHYDEEDQRERSQEQEQPRMESKRQRKRPIVGDEPQALAPFPDETPRGQSKGRIVSGAYLEEGHPEMEVRHRGGGGPAMEARWRKEGNWDGTMEGSDAQPPFWKRKKWWIVIGVLVVVLAIVIPVAVVMSKKHGHDDDKSGSSSSVDNSDSPYISSLDGLSHDSIPESAQGSILDPWTWYDTRDFNLTFTNETVGGLPIMGLNSTWDDSTRPNDNVPPLNESFPYGSQPIRGVNLGGWLSIEPFIVPSLFENYSSKDRIIDEYTLCKKLGSSAASTIEKHYADFISEQDFIDMRDAGLDHVRIQFSYWAVTTYDDDPYVAKISWRYLLRAIEYCRKYGLRVNLDPHGIPGSQNGWNHSGREGVIGWLNGTDGQLNRQRSLDFHNQISQFFAQPRYKNVVTIYGLVNEPLMLSLPVEDVLNWTTDATKLVQKNGISAYVTVHDGFLNLSKWKQMLKDRPDRMFLDTHQYTIFNTGQIVLNHTDRVKLICNDWYNMIKEINTTSAGWGPTICGEWSQADTDCAQYLNNVGRGTRWEGTFAIGDSTVYCPTADTGPTCSCASANAPPADYSDGYKKFLQTYAEAQMSAFGTAQGWFYWTWHTESAAQWSYKTAWKNGYMPKKAYAPDFKCGDDIPSFGDLPEYY</sequence>
<feature type="chain" id="PRO_0000395166" description="Probable glucan 1,3-beta-glucosidase D">
    <location>
        <begin position="1"/>
        <end position="831"/>
    </location>
</feature>
<feature type="topological domain" description="Cytoplasmic" evidence="2">
    <location>
        <begin position="1"/>
        <end position="297"/>
    </location>
</feature>
<feature type="transmembrane region" description="Helical; Signal-anchor for type II membrane protein" evidence="2">
    <location>
        <begin position="298"/>
        <end position="318"/>
    </location>
</feature>
<feature type="topological domain" description="Extracellular" evidence="2">
    <location>
        <begin position="319"/>
        <end position="831"/>
    </location>
</feature>
<feature type="region of interest" description="Disordered" evidence="3">
    <location>
        <begin position="1"/>
        <end position="179"/>
    </location>
</feature>
<feature type="region of interest" description="Disordered" evidence="3">
    <location>
        <begin position="192"/>
        <end position="241"/>
    </location>
</feature>
<feature type="compositionally biased region" description="Basic and acidic residues" evidence="3">
    <location>
        <begin position="1"/>
        <end position="24"/>
    </location>
</feature>
<feature type="compositionally biased region" description="Basic and acidic residues" evidence="3">
    <location>
        <begin position="44"/>
        <end position="56"/>
    </location>
</feature>
<feature type="compositionally biased region" description="Basic and acidic residues" evidence="3">
    <location>
        <begin position="79"/>
        <end position="93"/>
    </location>
</feature>
<feature type="compositionally biased region" description="Basic and acidic residues" evidence="3">
    <location>
        <begin position="102"/>
        <end position="115"/>
    </location>
</feature>
<feature type="compositionally biased region" description="Basic and acidic residues" evidence="3">
    <location>
        <begin position="137"/>
        <end position="151"/>
    </location>
</feature>
<feature type="compositionally biased region" description="Basic and acidic residues" evidence="3">
    <location>
        <begin position="198"/>
        <end position="213"/>
    </location>
</feature>
<feature type="active site" description="Proton donor" evidence="1">
    <location>
        <position position="597"/>
    </location>
</feature>
<feature type="active site" description="Nucleophile" evidence="1">
    <location>
        <position position="702"/>
    </location>
</feature>
<feature type="glycosylation site" description="N-linked (GlcNAc...) asparagine" evidence="2">
    <location>
        <position position="376"/>
    </location>
</feature>
<feature type="glycosylation site" description="N-linked (GlcNAc...) asparagine" evidence="2">
    <location>
        <position position="381"/>
    </location>
</feature>
<feature type="glycosylation site" description="N-linked (GlcNAc...) asparagine" evidence="2">
    <location>
        <position position="393"/>
    </location>
</feature>
<feature type="glycosylation site" description="N-linked (GlcNAc...) asparagine" evidence="2">
    <location>
        <position position="410"/>
    </location>
</feature>
<feature type="glycosylation site" description="N-linked (GlcNAc...) asparagine" evidence="2">
    <location>
        <position position="442"/>
    </location>
</feature>
<feature type="glycosylation site" description="N-linked (GlcNAc...) asparagine" evidence="2">
    <location>
        <position position="546"/>
    </location>
</feature>
<feature type="glycosylation site" description="N-linked (GlcNAc...) asparagine" evidence="2">
    <location>
        <position position="558"/>
    </location>
</feature>
<feature type="glycosylation site" description="N-linked (GlcNAc...) asparagine" evidence="2">
    <location>
        <position position="610"/>
    </location>
</feature>
<feature type="glycosylation site" description="N-linked (GlcNAc...) asparagine" evidence="2">
    <location>
        <position position="636"/>
    </location>
</feature>
<feature type="glycosylation site" description="N-linked (GlcNAc...) asparagine" evidence="2">
    <location>
        <position position="669"/>
    </location>
</feature>
<feature type="glycosylation site" description="N-linked (GlcNAc...) asparagine" evidence="2">
    <location>
        <position position="689"/>
    </location>
</feature>
<organism>
    <name type="scientific">Aspergillus oryzae (strain ATCC 42149 / RIB 40)</name>
    <name type="common">Yellow koji mold</name>
    <dbReference type="NCBI Taxonomy" id="510516"/>
    <lineage>
        <taxon>Eukaryota</taxon>
        <taxon>Fungi</taxon>
        <taxon>Dikarya</taxon>
        <taxon>Ascomycota</taxon>
        <taxon>Pezizomycotina</taxon>
        <taxon>Eurotiomycetes</taxon>
        <taxon>Eurotiomycetidae</taxon>
        <taxon>Eurotiales</taxon>
        <taxon>Aspergillaceae</taxon>
        <taxon>Aspergillus</taxon>
        <taxon>Aspergillus subgen. Circumdati</taxon>
    </lineage>
</organism>